<protein>
    <recommendedName>
        <fullName evidence="1">NAD-dependent malic enzyme</fullName>
        <shortName evidence="1">NAD-ME</shortName>
        <ecNumber evidence="1">1.1.1.38</ecNumber>
    </recommendedName>
</protein>
<gene>
    <name evidence="1" type="primary">maeA</name>
    <name type="ordered locus">SBO_1578</name>
</gene>
<proteinExistence type="inferred from homology"/>
<organism>
    <name type="scientific">Shigella boydii serotype 4 (strain Sb227)</name>
    <dbReference type="NCBI Taxonomy" id="300268"/>
    <lineage>
        <taxon>Bacteria</taxon>
        <taxon>Pseudomonadati</taxon>
        <taxon>Pseudomonadota</taxon>
        <taxon>Gammaproteobacteria</taxon>
        <taxon>Enterobacterales</taxon>
        <taxon>Enterobacteriaceae</taxon>
        <taxon>Shigella</taxon>
    </lineage>
</organism>
<reference key="1">
    <citation type="journal article" date="2005" name="Nucleic Acids Res.">
        <title>Genome dynamics and diversity of Shigella species, the etiologic agents of bacillary dysentery.</title>
        <authorList>
            <person name="Yang F."/>
            <person name="Yang J."/>
            <person name="Zhang X."/>
            <person name="Chen L."/>
            <person name="Jiang Y."/>
            <person name="Yan Y."/>
            <person name="Tang X."/>
            <person name="Wang J."/>
            <person name="Xiong Z."/>
            <person name="Dong J."/>
            <person name="Xue Y."/>
            <person name="Zhu Y."/>
            <person name="Xu X."/>
            <person name="Sun L."/>
            <person name="Chen S."/>
            <person name="Nie H."/>
            <person name="Peng J."/>
            <person name="Xu J."/>
            <person name="Wang Y."/>
            <person name="Yuan Z."/>
            <person name="Wen Y."/>
            <person name="Yao Z."/>
            <person name="Shen Y."/>
            <person name="Qiang B."/>
            <person name="Hou Y."/>
            <person name="Yu J."/>
            <person name="Jin Q."/>
        </authorList>
    </citation>
    <scope>NUCLEOTIDE SEQUENCE [LARGE SCALE GENOMIC DNA]</scope>
    <source>
        <strain>Sb227</strain>
    </source>
</reference>
<name>MAO1_SHIBS</name>
<dbReference type="EC" id="1.1.1.38" evidence="1"/>
<dbReference type="EMBL" id="CP000036">
    <property type="protein sequence ID" value="ABB66190.1"/>
    <property type="status" value="ALT_INIT"/>
    <property type="molecule type" value="Genomic_DNA"/>
</dbReference>
<dbReference type="RefSeq" id="WP_000433446.1">
    <property type="nucleotide sequence ID" value="NC_007613.1"/>
</dbReference>
<dbReference type="SMR" id="Q320R8"/>
<dbReference type="KEGG" id="sbo:SBO_1578"/>
<dbReference type="HOGENOM" id="CLU_011405_5_2_6"/>
<dbReference type="Proteomes" id="UP000007067">
    <property type="component" value="Chromosome"/>
</dbReference>
<dbReference type="GO" id="GO:0005829">
    <property type="term" value="C:cytosol"/>
    <property type="evidence" value="ECO:0007669"/>
    <property type="project" value="TreeGrafter"/>
</dbReference>
<dbReference type="GO" id="GO:0004471">
    <property type="term" value="F:malate dehydrogenase (decarboxylating) (NAD+) activity"/>
    <property type="evidence" value="ECO:0007669"/>
    <property type="project" value="UniProtKB-UniRule"/>
</dbReference>
<dbReference type="GO" id="GO:0046872">
    <property type="term" value="F:metal ion binding"/>
    <property type="evidence" value="ECO:0007669"/>
    <property type="project" value="UniProtKB-KW"/>
</dbReference>
<dbReference type="GO" id="GO:0051287">
    <property type="term" value="F:NAD binding"/>
    <property type="evidence" value="ECO:0007669"/>
    <property type="project" value="InterPro"/>
</dbReference>
<dbReference type="GO" id="GO:0008948">
    <property type="term" value="F:oxaloacetate decarboxylase activity"/>
    <property type="evidence" value="ECO:0007669"/>
    <property type="project" value="UniProtKB-UniRule"/>
</dbReference>
<dbReference type="GO" id="GO:0006108">
    <property type="term" value="P:malate metabolic process"/>
    <property type="evidence" value="ECO:0007669"/>
    <property type="project" value="TreeGrafter"/>
</dbReference>
<dbReference type="CDD" id="cd05312">
    <property type="entry name" value="NAD_bind_1_malic_enz"/>
    <property type="match status" value="1"/>
</dbReference>
<dbReference type="FunFam" id="3.40.50.10380:FF:000001">
    <property type="entry name" value="NAD-dependent malic enzyme"/>
    <property type="match status" value="1"/>
</dbReference>
<dbReference type="FunFam" id="3.40.50.720:FF:000055">
    <property type="entry name" value="NAD-dependent malic enzyme"/>
    <property type="match status" value="1"/>
</dbReference>
<dbReference type="Gene3D" id="3.40.50.10380">
    <property type="entry name" value="Malic enzyme, N-terminal domain"/>
    <property type="match status" value="1"/>
</dbReference>
<dbReference type="Gene3D" id="3.40.50.720">
    <property type="entry name" value="NAD(P)-binding Rossmann-like Domain"/>
    <property type="match status" value="1"/>
</dbReference>
<dbReference type="HAMAP" id="MF_01619">
    <property type="entry name" value="NAD_malic_enz"/>
    <property type="match status" value="1"/>
</dbReference>
<dbReference type="InterPro" id="IPR046346">
    <property type="entry name" value="Aminoacid_DH-like_N_sf"/>
</dbReference>
<dbReference type="InterPro" id="IPR015884">
    <property type="entry name" value="Malic_enzyme_CS"/>
</dbReference>
<dbReference type="InterPro" id="IPR012301">
    <property type="entry name" value="Malic_N_dom"/>
</dbReference>
<dbReference type="InterPro" id="IPR037062">
    <property type="entry name" value="Malic_N_dom_sf"/>
</dbReference>
<dbReference type="InterPro" id="IPR012302">
    <property type="entry name" value="Malic_NAD-bd"/>
</dbReference>
<dbReference type="InterPro" id="IPR001891">
    <property type="entry name" value="Malic_OxRdtase"/>
</dbReference>
<dbReference type="InterPro" id="IPR036291">
    <property type="entry name" value="NAD(P)-bd_dom_sf"/>
</dbReference>
<dbReference type="InterPro" id="IPR023667">
    <property type="entry name" value="NAD_malic_enz_proteobac"/>
</dbReference>
<dbReference type="NCBIfam" id="NF010052">
    <property type="entry name" value="PRK13529.1"/>
    <property type="match status" value="1"/>
</dbReference>
<dbReference type="PANTHER" id="PTHR23406">
    <property type="entry name" value="MALIC ENZYME-RELATED"/>
    <property type="match status" value="1"/>
</dbReference>
<dbReference type="PANTHER" id="PTHR23406:SF34">
    <property type="entry name" value="NAD-DEPENDENT MALIC ENZYME, MITOCHONDRIAL"/>
    <property type="match status" value="1"/>
</dbReference>
<dbReference type="Pfam" id="PF00390">
    <property type="entry name" value="malic"/>
    <property type="match status" value="1"/>
</dbReference>
<dbReference type="Pfam" id="PF03949">
    <property type="entry name" value="Malic_M"/>
    <property type="match status" value="1"/>
</dbReference>
<dbReference type="PIRSF" id="PIRSF000106">
    <property type="entry name" value="ME"/>
    <property type="match status" value="1"/>
</dbReference>
<dbReference type="PRINTS" id="PR00072">
    <property type="entry name" value="MALOXRDTASE"/>
</dbReference>
<dbReference type="SMART" id="SM01274">
    <property type="entry name" value="malic"/>
    <property type="match status" value="1"/>
</dbReference>
<dbReference type="SMART" id="SM00919">
    <property type="entry name" value="Malic_M"/>
    <property type="match status" value="1"/>
</dbReference>
<dbReference type="SUPFAM" id="SSF53223">
    <property type="entry name" value="Aminoacid dehydrogenase-like, N-terminal domain"/>
    <property type="match status" value="1"/>
</dbReference>
<dbReference type="SUPFAM" id="SSF51735">
    <property type="entry name" value="NAD(P)-binding Rossmann-fold domains"/>
    <property type="match status" value="1"/>
</dbReference>
<dbReference type="PROSITE" id="PS00331">
    <property type="entry name" value="MALIC_ENZYMES"/>
    <property type="match status" value="1"/>
</dbReference>
<comment type="catalytic activity">
    <reaction evidence="1">
        <text>(S)-malate + NAD(+) = pyruvate + CO2 + NADH</text>
        <dbReference type="Rhea" id="RHEA:12653"/>
        <dbReference type="ChEBI" id="CHEBI:15361"/>
        <dbReference type="ChEBI" id="CHEBI:15589"/>
        <dbReference type="ChEBI" id="CHEBI:16526"/>
        <dbReference type="ChEBI" id="CHEBI:57540"/>
        <dbReference type="ChEBI" id="CHEBI:57945"/>
        <dbReference type="EC" id="1.1.1.38"/>
    </reaction>
</comment>
<comment type="catalytic activity">
    <reaction evidence="1">
        <text>oxaloacetate + H(+) = pyruvate + CO2</text>
        <dbReference type="Rhea" id="RHEA:15641"/>
        <dbReference type="ChEBI" id="CHEBI:15361"/>
        <dbReference type="ChEBI" id="CHEBI:15378"/>
        <dbReference type="ChEBI" id="CHEBI:16452"/>
        <dbReference type="ChEBI" id="CHEBI:16526"/>
        <dbReference type="EC" id="1.1.1.38"/>
    </reaction>
</comment>
<comment type="cofactor">
    <cofactor evidence="1">
        <name>Mg(2+)</name>
        <dbReference type="ChEBI" id="CHEBI:18420"/>
    </cofactor>
    <cofactor evidence="1">
        <name>Mn(2+)</name>
        <dbReference type="ChEBI" id="CHEBI:29035"/>
    </cofactor>
    <text evidence="1">Divalent metal cations. Prefers magnesium or manganese.</text>
</comment>
<comment type="subunit">
    <text evidence="1">Homotetramer.</text>
</comment>
<comment type="similarity">
    <text evidence="1">Belongs to the malic enzymes family.</text>
</comment>
<comment type="sequence caution" evidence="2">
    <conflict type="erroneous initiation">
        <sequence resource="EMBL-CDS" id="ABB66190"/>
    </conflict>
</comment>
<keyword id="KW-0479">Metal-binding</keyword>
<keyword id="KW-0520">NAD</keyword>
<keyword id="KW-0560">Oxidoreductase</keyword>
<evidence type="ECO:0000255" key="1">
    <source>
        <dbReference type="HAMAP-Rule" id="MF_01619"/>
    </source>
</evidence>
<evidence type="ECO:0000305" key="2"/>
<sequence length="565" mass="63175">MEPKTKKQRSLYIPYAGPVLLEFPLLNKGSAFSMEERRNFNLLGLLPEVVETIEEQAERAWIQYQGFKTEIDKHIYLRNIQDTNETLFYRLVNNHLDEMMPVIYTPTVGAACERFSEIYRRSRGVFISYQNRHNMDDILQNVPNHNIKVIVVTDGERILGLGDQGIGGMGIPIGKLSLYTACGGISPAYTLPVVLDVGTNNQQLLNDPLYMGWRNPRIIDDEYYEFVDEFIQAVKQRWPDVLLQFEDFAQKNAMPLLNRYRNEICSFNDDIQGTAAVTVGTLIAASRAAGGQLSEKKIVFLGAGSAGCGIAEMIIAQTQREGLSEEAARQKVFMVDRFGLLTDKMPNLLPFQTKLVQKRENLSDWDTDSDVLSLLDVVRNVKPDILIGVSGQTGLFTEEIIREMHKHCPRPIVMPLSNPTSRVEATPQDIIAWTEGNALVATGSPFNPVVWKDKIYPIAQCNNAFIFPGIGLGVIASGASRITDEMLMSASETLAQYSPLVLNGEGLVLPELKDIQKVSRAIAFAVGKMAQQQGVAVKTSAEALQQAIDDNFWQAEYRDYRRTSI</sequence>
<accession>Q320R8</accession>
<feature type="chain" id="PRO_0000323539" description="NAD-dependent malic enzyme">
    <location>
        <begin position="1"/>
        <end position="565"/>
    </location>
</feature>
<feature type="active site" description="Proton donor" evidence="1">
    <location>
        <position position="104"/>
    </location>
</feature>
<feature type="active site" description="Proton acceptor" evidence="1">
    <location>
        <position position="175"/>
    </location>
</feature>
<feature type="binding site" evidence="1">
    <location>
        <position position="157"/>
    </location>
    <ligand>
        <name>NAD(+)</name>
        <dbReference type="ChEBI" id="CHEBI:57540"/>
    </ligand>
</feature>
<feature type="binding site" evidence="1">
    <location>
        <position position="246"/>
    </location>
    <ligand>
        <name>a divalent metal cation</name>
        <dbReference type="ChEBI" id="CHEBI:60240"/>
    </ligand>
</feature>
<feature type="binding site" evidence="1">
    <location>
        <position position="247"/>
    </location>
    <ligand>
        <name>a divalent metal cation</name>
        <dbReference type="ChEBI" id="CHEBI:60240"/>
    </ligand>
</feature>
<feature type="binding site" evidence="1">
    <location>
        <position position="270"/>
    </location>
    <ligand>
        <name>a divalent metal cation</name>
        <dbReference type="ChEBI" id="CHEBI:60240"/>
    </ligand>
</feature>
<feature type="binding site" evidence="1">
    <location>
        <position position="270"/>
    </location>
    <ligand>
        <name>NAD(+)</name>
        <dbReference type="ChEBI" id="CHEBI:57540"/>
    </ligand>
</feature>
<feature type="binding site" evidence="1">
    <location>
        <position position="418"/>
    </location>
    <ligand>
        <name>NAD(+)</name>
        <dbReference type="ChEBI" id="CHEBI:57540"/>
    </ligand>
</feature>
<feature type="site" description="Important for activity" evidence="1">
    <location>
        <position position="270"/>
    </location>
</feature>